<reference key="1">
    <citation type="journal article" date="2000" name="Nature">
        <title>A triclosan-resistant bacterial enzyme.</title>
        <authorList>
            <person name="Heath R.J."/>
            <person name="Rock C.O."/>
        </authorList>
    </citation>
    <scope>NUCLEOTIDE SEQUENCE [GENOMIC DNA]</scope>
</reference>
<reference key="2">
    <citation type="journal article" date="2001" name="J. Bacteriol.">
        <title>Genome of the bacterium Streptococcus pneumoniae strain R6.</title>
        <authorList>
            <person name="Hoskins J."/>
            <person name="Alborn W.E. Jr."/>
            <person name="Arnold J."/>
            <person name="Blaszczak L.C."/>
            <person name="Burgett S."/>
            <person name="DeHoff B.S."/>
            <person name="Estrem S.T."/>
            <person name="Fritz L."/>
            <person name="Fu D.-J."/>
            <person name="Fuller W."/>
            <person name="Geringer C."/>
            <person name="Gilmour R."/>
            <person name="Glass J.S."/>
            <person name="Khoja H."/>
            <person name="Kraft A.R."/>
            <person name="Lagace R.E."/>
            <person name="LeBlanc D.J."/>
            <person name="Lee L.N."/>
            <person name="Lefkowitz E.J."/>
            <person name="Lu J."/>
            <person name="Matsushima P."/>
            <person name="McAhren S.M."/>
            <person name="McHenney M."/>
            <person name="McLeaster K."/>
            <person name="Mundy C.W."/>
            <person name="Nicas T.I."/>
            <person name="Norris F.H."/>
            <person name="O'Gara M."/>
            <person name="Peery R.B."/>
            <person name="Robertson G.T."/>
            <person name="Rockey P."/>
            <person name="Sun P.-M."/>
            <person name="Winkler M.E."/>
            <person name="Yang Y."/>
            <person name="Young-Bellido M."/>
            <person name="Zhao G."/>
            <person name="Zook C.A."/>
            <person name="Baltz R.H."/>
            <person name="Jaskunas S.R."/>
            <person name="Rosteck P.R. Jr."/>
            <person name="Skatrud P.L."/>
            <person name="Glass J.I."/>
        </authorList>
    </citation>
    <scope>NUCLEOTIDE SEQUENCE [LARGE SCALE GENOMIC DNA]</scope>
    <source>
        <strain>ATCC BAA-255 / R6</strain>
    </source>
</reference>
<evidence type="ECO:0000250" key="1"/>
<evidence type="ECO:0000305" key="2"/>
<gene>
    <name type="primary">fabZ</name>
    <name type="ordered locus">spr0384</name>
</gene>
<accession>P59202</accession>
<accession>Q9FBC0</accession>
<name>FABZ_STRR6</name>
<proteinExistence type="inferred from homology"/>
<sequence length="140" mass="15298">MIDIQGIKEALPHRYPMLLVDRVLEVSEDTIVAIKNVTINEPFFNGHFPQYPVMPGVLIMEALAQTAGVLELSKPENKGKLVFYAGMDKVKFKKQVVPGDQLVMTATFVKRRGTIAVVEAKAEVDGKLAASGILTFAIGN</sequence>
<organism>
    <name type="scientific">Streptococcus pneumoniae (strain ATCC BAA-255 / R6)</name>
    <dbReference type="NCBI Taxonomy" id="171101"/>
    <lineage>
        <taxon>Bacteria</taxon>
        <taxon>Bacillati</taxon>
        <taxon>Bacillota</taxon>
        <taxon>Bacilli</taxon>
        <taxon>Lactobacillales</taxon>
        <taxon>Streptococcaceae</taxon>
        <taxon>Streptococcus</taxon>
    </lineage>
</organism>
<keyword id="KW-0963">Cytoplasm</keyword>
<keyword id="KW-0441">Lipid A biosynthesis</keyword>
<keyword id="KW-0444">Lipid biosynthesis</keyword>
<keyword id="KW-0443">Lipid metabolism</keyword>
<keyword id="KW-0456">Lyase</keyword>
<keyword id="KW-1185">Reference proteome</keyword>
<protein>
    <recommendedName>
        <fullName>3-hydroxyacyl-[acyl-carrier-protein] dehydratase FabZ</fullName>
        <ecNumber>4.2.1.59</ecNumber>
    </recommendedName>
    <alternativeName>
        <fullName>(3R)-hydroxymyristoyl-[acyl-carrier-protein] dehydratase</fullName>
        <shortName>(3R)-hydroxymyristoyl-ACP dehydrase</shortName>
    </alternativeName>
    <alternativeName>
        <fullName>Beta-hydroxyacyl-ACP dehydratase</fullName>
    </alternativeName>
</protein>
<dbReference type="EC" id="4.2.1.59"/>
<dbReference type="EMBL" id="AF197933">
    <property type="protein sequence ID" value="AAF98278.1"/>
    <property type="molecule type" value="Genomic_DNA"/>
</dbReference>
<dbReference type="EMBL" id="AE007317">
    <property type="protein sequence ID" value="AAK99188.1"/>
    <property type="molecule type" value="Genomic_DNA"/>
</dbReference>
<dbReference type="PIR" id="H97919">
    <property type="entry name" value="H97919"/>
</dbReference>
<dbReference type="RefSeq" id="NP_357978.1">
    <property type="nucleotide sequence ID" value="NC_003098.1"/>
</dbReference>
<dbReference type="RefSeq" id="WP_000565514.1">
    <property type="nucleotide sequence ID" value="NC_003098.1"/>
</dbReference>
<dbReference type="SMR" id="P59202"/>
<dbReference type="STRING" id="171101.spr0384"/>
<dbReference type="GeneID" id="45652122"/>
<dbReference type="KEGG" id="spr:spr0384"/>
<dbReference type="PATRIC" id="fig|171101.6.peg.425"/>
<dbReference type="eggNOG" id="COG0764">
    <property type="taxonomic scope" value="Bacteria"/>
</dbReference>
<dbReference type="HOGENOM" id="CLU_078912_3_0_9"/>
<dbReference type="Proteomes" id="UP000000586">
    <property type="component" value="Chromosome"/>
</dbReference>
<dbReference type="GO" id="GO:0005737">
    <property type="term" value="C:cytoplasm"/>
    <property type="evidence" value="ECO:0007669"/>
    <property type="project" value="UniProtKB-SubCell"/>
</dbReference>
<dbReference type="GO" id="GO:0016020">
    <property type="term" value="C:membrane"/>
    <property type="evidence" value="ECO:0007669"/>
    <property type="project" value="GOC"/>
</dbReference>
<dbReference type="GO" id="GO:0019171">
    <property type="term" value="F:(3R)-hydroxyacyl-[acyl-carrier-protein] dehydratase activity"/>
    <property type="evidence" value="ECO:0007669"/>
    <property type="project" value="UniProtKB-EC"/>
</dbReference>
<dbReference type="GO" id="GO:0006633">
    <property type="term" value="P:fatty acid biosynthetic process"/>
    <property type="evidence" value="ECO:0007669"/>
    <property type="project" value="UniProtKB-UniRule"/>
</dbReference>
<dbReference type="GO" id="GO:0009245">
    <property type="term" value="P:lipid A biosynthetic process"/>
    <property type="evidence" value="ECO:0007669"/>
    <property type="project" value="UniProtKB-UniRule"/>
</dbReference>
<dbReference type="CDD" id="cd01288">
    <property type="entry name" value="FabZ"/>
    <property type="match status" value="1"/>
</dbReference>
<dbReference type="FunFam" id="3.10.129.10:FF:000001">
    <property type="entry name" value="3-hydroxyacyl-[acyl-carrier-protein] dehydratase FabZ"/>
    <property type="match status" value="1"/>
</dbReference>
<dbReference type="Gene3D" id="3.10.129.10">
    <property type="entry name" value="Hotdog Thioesterase"/>
    <property type="match status" value="1"/>
</dbReference>
<dbReference type="HAMAP" id="MF_00406">
    <property type="entry name" value="FabZ"/>
    <property type="match status" value="1"/>
</dbReference>
<dbReference type="InterPro" id="IPR013114">
    <property type="entry name" value="FabA_FabZ"/>
</dbReference>
<dbReference type="InterPro" id="IPR010084">
    <property type="entry name" value="FabZ"/>
</dbReference>
<dbReference type="InterPro" id="IPR029069">
    <property type="entry name" value="HotDog_dom_sf"/>
</dbReference>
<dbReference type="NCBIfam" id="TIGR01750">
    <property type="entry name" value="fabZ"/>
    <property type="match status" value="1"/>
</dbReference>
<dbReference type="NCBIfam" id="NF000582">
    <property type="entry name" value="PRK00006.1"/>
    <property type="match status" value="1"/>
</dbReference>
<dbReference type="PANTHER" id="PTHR30272">
    <property type="entry name" value="3-HYDROXYACYL-[ACYL-CARRIER-PROTEIN] DEHYDRATASE"/>
    <property type="match status" value="1"/>
</dbReference>
<dbReference type="PANTHER" id="PTHR30272:SF1">
    <property type="entry name" value="3-HYDROXYACYL-[ACYL-CARRIER-PROTEIN] DEHYDRATASE"/>
    <property type="match status" value="1"/>
</dbReference>
<dbReference type="Pfam" id="PF07977">
    <property type="entry name" value="FabA"/>
    <property type="match status" value="1"/>
</dbReference>
<dbReference type="SUPFAM" id="SSF54637">
    <property type="entry name" value="Thioesterase/thiol ester dehydrase-isomerase"/>
    <property type="match status" value="1"/>
</dbReference>
<feature type="chain" id="PRO_0000091742" description="3-hydroxyacyl-[acyl-carrier-protein] dehydratase FabZ">
    <location>
        <begin position="1"/>
        <end position="140"/>
    </location>
</feature>
<feature type="active site" evidence="1">
    <location>
        <position position="47"/>
    </location>
</feature>
<feature type="sequence conflict" description="In Ref. 1; AAF98278." evidence="2" ref="1">
    <original>L</original>
    <variation>V</variation>
    <location>
        <position position="58"/>
    </location>
</feature>
<feature type="sequence conflict" description="In Ref. 1; AAF98278." evidence="2" ref="1">
    <original>I</original>
    <variation>T</variation>
    <location>
        <position position="133"/>
    </location>
</feature>
<comment type="function">
    <text evidence="1">Involved in unsaturated fatty acids biosynthesis. Catalyzes the dehydration of short chain beta-hydroxyacyl-ACPs and long chain saturated and unsaturated beta-hydroxyacyl-ACPs (By similarity).</text>
</comment>
<comment type="catalytic activity">
    <reaction>
        <text>a (3R)-hydroxyacyl-[ACP] = a (2E)-enoyl-[ACP] + H2O</text>
        <dbReference type="Rhea" id="RHEA:13097"/>
        <dbReference type="Rhea" id="RHEA-COMP:9925"/>
        <dbReference type="Rhea" id="RHEA-COMP:9945"/>
        <dbReference type="ChEBI" id="CHEBI:15377"/>
        <dbReference type="ChEBI" id="CHEBI:78784"/>
        <dbReference type="ChEBI" id="CHEBI:78827"/>
        <dbReference type="EC" id="4.2.1.59"/>
    </reaction>
</comment>
<comment type="subcellular location">
    <subcellularLocation>
        <location evidence="1">Cytoplasm</location>
    </subcellularLocation>
</comment>
<comment type="similarity">
    <text evidence="2">Belongs to the thioester dehydratase family. FabZ subfamily.</text>
</comment>